<dbReference type="EC" id="5.4.3.8" evidence="1"/>
<dbReference type="EMBL" id="CP000653">
    <property type="protein sequence ID" value="ABP59381.1"/>
    <property type="molecule type" value="Genomic_DNA"/>
</dbReference>
<dbReference type="RefSeq" id="WP_012016102.1">
    <property type="nucleotide sequence ID" value="NC_009436.1"/>
</dbReference>
<dbReference type="SMR" id="A4W6Q1"/>
<dbReference type="STRING" id="399742.Ent638_0694"/>
<dbReference type="KEGG" id="ent:Ent638_0694"/>
<dbReference type="eggNOG" id="COG0001">
    <property type="taxonomic scope" value="Bacteria"/>
</dbReference>
<dbReference type="HOGENOM" id="CLU_016922_1_5_6"/>
<dbReference type="OrthoDB" id="9801052at2"/>
<dbReference type="UniPathway" id="UPA00251">
    <property type="reaction ID" value="UER00317"/>
</dbReference>
<dbReference type="Proteomes" id="UP000000230">
    <property type="component" value="Chromosome"/>
</dbReference>
<dbReference type="GO" id="GO:0005737">
    <property type="term" value="C:cytoplasm"/>
    <property type="evidence" value="ECO:0007669"/>
    <property type="project" value="UniProtKB-SubCell"/>
</dbReference>
<dbReference type="GO" id="GO:0042286">
    <property type="term" value="F:glutamate-1-semialdehyde 2,1-aminomutase activity"/>
    <property type="evidence" value="ECO:0007669"/>
    <property type="project" value="UniProtKB-UniRule"/>
</dbReference>
<dbReference type="GO" id="GO:0030170">
    <property type="term" value="F:pyridoxal phosphate binding"/>
    <property type="evidence" value="ECO:0007669"/>
    <property type="project" value="InterPro"/>
</dbReference>
<dbReference type="GO" id="GO:0008483">
    <property type="term" value="F:transaminase activity"/>
    <property type="evidence" value="ECO:0007669"/>
    <property type="project" value="InterPro"/>
</dbReference>
<dbReference type="GO" id="GO:0006782">
    <property type="term" value="P:protoporphyrinogen IX biosynthetic process"/>
    <property type="evidence" value="ECO:0007669"/>
    <property type="project" value="UniProtKB-UniRule"/>
</dbReference>
<dbReference type="CDD" id="cd00610">
    <property type="entry name" value="OAT_like"/>
    <property type="match status" value="1"/>
</dbReference>
<dbReference type="FunFam" id="3.40.640.10:FF:000021">
    <property type="entry name" value="Glutamate-1-semialdehyde 2,1-aminomutase"/>
    <property type="match status" value="1"/>
</dbReference>
<dbReference type="FunFam" id="3.90.1150.10:FF:000012">
    <property type="entry name" value="Glutamate-1-semialdehyde 2,1-aminomutase"/>
    <property type="match status" value="1"/>
</dbReference>
<dbReference type="Gene3D" id="3.90.1150.10">
    <property type="entry name" value="Aspartate Aminotransferase, domain 1"/>
    <property type="match status" value="1"/>
</dbReference>
<dbReference type="Gene3D" id="3.40.640.10">
    <property type="entry name" value="Type I PLP-dependent aspartate aminotransferase-like (Major domain)"/>
    <property type="match status" value="1"/>
</dbReference>
<dbReference type="HAMAP" id="MF_00375">
    <property type="entry name" value="HemL_aminotrans_3"/>
    <property type="match status" value="1"/>
</dbReference>
<dbReference type="InterPro" id="IPR004639">
    <property type="entry name" value="4pyrrol_synth_GluAld_NH2Trfase"/>
</dbReference>
<dbReference type="InterPro" id="IPR005814">
    <property type="entry name" value="Aminotrans_3"/>
</dbReference>
<dbReference type="InterPro" id="IPR049704">
    <property type="entry name" value="Aminotrans_3_PPA_site"/>
</dbReference>
<dbReference type="InterPro" id="IPR015424">
    <property type="entry name" value="PyrdxlP-dep_Trfase"/>
</dbReference>
<dbReference type="InterPro" id="IPR015421">
    <property type="entry name" value="PyrdxlP-dep_Trfase_major"/>
</dbReference>
<dbReference type="InterPro" id="IPR015422">
    <property type="entry name" value="PyrdxlP-dep_Trfase_small"/>
</dbReference>
<dbReference type="NCBIfam" id="TIGR00713">
    <property type="entry name" value="hemL"/>
    <property type="match status" value="1"/>
</dbReference>
<dbReference type="NCBIfam" id="NF000818">
    <property type="entry name" value="PRK00062.1"/>
    <property type="match status" value="1"/>
</dbReference>
<dbReference type="PANTHER" id="PTHR43713">
    <property type="entry name" value="GLUTAMATE-1-SEMIALDEHYDE 2,1-AMINOMUTASE"/>
    <property type="match status" value="1"/>
</dbReference>
<dbReference type="PANTHER" id="PTHR43713:SF3">
    <property type="entry name" value="GLUTAMATE-1-SEMIALDEHYDE 2,1-AMINOMUTASE 1, CHLOROPLASTIC-RELATED"/>
    <property type="match status" value="1"/>
</dbReference>
<dbReference type="Pfam" id="PF00202">
    <property type="entry name" value="Aminotran_3"/>
    <property type="match status" value="1"/>
</dbReference>
<dbReference type="SUPFAM" id="SSF53383">
    <property type="entry name" value="PLP-dependent transferases"/>
    <property type="match status" value="1"/>
</dbReference>
<dbReference type="PROSITE" id="PS00600">
    <property type="entry name" value="AA_TRANSFER_CLASS_3"/>
    <property type="match status" value="1"/>
</dbReference>
<gene>
    <name evidence="1" type="primary">hemL</name>
    <name type="ordered locus">Ent638_0694</name>
</gene>
<name>GSA_ENT38</name>
<keyword id="KW-0963">Cytoplasm</keyword>
<keyword id="KW-0413">Isomerase</keyword>
<keyword id="KW-0627">Porphyrin biosynthesis</keyword>
<keyword id="KW-0663">Pyridoxal phosphate</keyword>
<comment type="catalytic activity">
    <reaction evidence="1">
        <text>(S)-4-amino-5-oxopentanoate = 5-aminolevulinate</text>
        <dbReference type="Rhea" id="RHEA:14265"/>
        <dbReference type="ChEBI" id="CHEBI:57501"/>
        <dbReference type="ChEBI" id="CHEBI:356416"/>
        <dbReference type="EC" id="5.4.3.8"/>
    </reaction>
</comment>
<comment type="cofactor">
    <cofactor evidence="1">
        <name>pyridoxal 5'-phosphate</name>
        <dbReference type="ChEBI" id="CHEBI:597326"/>
    </cofactor>
</comment>
<comment type="pathway">
    <text evidence="1">Porphyrin-containing compound metabolism; protoporphyrin-IX biosynthesis; 5-aminolevulinate from L-glutamyl-tRNA(Glu): step 2/2.</text>
</comment>
<comment type="subunit">
    <text evidence="1">Homodimer.</text>
</comment>
<comment type="subcellular location">
    <subcellularLocation>
        <location evidence="1">Cytoplasm</location>
    </subcellularLocation>
</comment>
<comment type="similarity">
    <text evidence="1">Belongs to the class-III pyridoxal-phosphate-dependent aminotransferase family. HemL subfamily.</text>
</comment>
<organism>
    <name type="scientific">Enterobacter sp. (strain 638)</name>
    <dbReference type="NCBI Taxonomy" id="399742"/>
    <lineage>
        <taxon>Bacteria</taxon>
        <taxon>Pseudomonadati</taxon>
        <taxon>Pseudomonadota</taxon>
        <taxon>Gammaproteobacteria</taxon>
        <taxon>Enterobacterales</taxon>
        <taxon>Enterobacteriaceae</taxon>
        <taxon>Enterobacter</taxon>
    </lineage>
</organism>
<evidence type="ECO:0000255" key="1">
    <source>
        <dbReference type="HAMAP-Rule" id="MF_00375"/>
    </source>
</evidence>
<accession>A4W6Q1</accession>
<reference key="1">
    <citation type="journal article" date="2010" name="PLoS Genet.">
        <title>Genome sequence of the plant growth promoting endophytic bacterium Enterobacter sp. 638.</title>
        <authorList>
            <person name="Taghavi S."/>
            <person name="van der Lelie D."/>
            <person name="Hoffman A."/>
            <person name="Zhang Y.B."/>
            <person name="Walla M.D."/>
            <person name="Vangronsveld J."/>
            <person name="Newman L."/>
            <person name="Monchy S."/>
        </authorList>
    </citation>
    <scope>NUCLEOTIDE SEQUENCE [LARGE SCALE GENOMIC DNA]</scope>
    <source>
        <strain>638</strain>
    </source>
</reference>
<protein>
    <recommendedName>
        <fullName evidence="1">Glutamate-1-semialdehyde 2,1-aminomutase</fullName>
        <shortName evidence="1">GSA</shortName>
        <ecNumber evidence="1">5.4.3.8</ecNumber>
    </recommendedName>
    <alternativeName>
        <fullName evidence="1">Glutamate-1-semialdehyde aminotransferase</fullName>
        <shortName evidence="1">GSA-AT</shortName>
    </alternativeName>
</protein>
<feature type="chain" id="PRO_1000059987" description="Glutamate-1-semialdehyde 2,1-aminomutase">
    <location>
        <begin position="1"/>
        <end position="426"/>
    </location>
</feature>
<feature type="modified residue" description="N6-(pyridoxal phosphate)lysine" evidence="1">
    <location>
        <position position="265"/>
    </location>
</feature>
<proteinExistence type="inferred from homology"/>
<sequence length="426" mass="45361">MSKSENLYSAARELIPGGVNSPVRAFTGVGGTPLFIERADGAFLYDVDGKAYIDYVGSWGPMVLGHNHPTIRNAVIEAAQRGLSFGAPTEMEVKMAELVTELVPTMDMVRMVNSGTEATMSAIRLARGFTGRDKIIKFEGCYHGHADCLLVKAGSGALTLGQPNSPGVPADFAKHTLTCTYNDLDTVRAAFEQYPQEVACIIVEPVAGNMNCIPPQPDFLPGLRALCDEFGALLIIDEVMTGFRVALAGAQSYYDVVPDLTCLGKIIGGGMPVGAFGGRKDVMEALAPTGPVYQAGTLSGNPIAMAAGFACLTEVAQPGIHETLTDLTAQLANGLLEAAEETGVPLVVNHVGGMFGIFFTDAKTVTCYQDVVKCDVERFKRFFHLMLEEGVYLAPSAFEAGFMSVAHSVEDINKTIDAARKVFAKL</sequence>